<evidence type="ECO:0000255" key="1">
    <source>
        <dbReference type="HAMAP-Rule" id="MF_01325"/>
    </source>
</evidence>
<evidence type="ECO:0000256" key="2">
    <source>
        <dbReference type="SAM" id="MobiDB-lite"/>
    </source>
</evidence>
<evidence type="ECO:0000305" key="3"/>
<sequence length="226" mass="23743">MTTANPGDRLGLLGRKVGMMRIFTDDGDAVPVTVLDVSNNRVTQVKTVETDGYSAIQVTFGARKASRVTKPEAGHLAKAGVEAGEILREFAVSAEVAAEYKPGGTLPVGLFAAGQKVDVQGTSIGKGFTGTIKRHNFGSQRASHGNSRSHNVPGSISMAQDPGRVFPGKKMSGHRGDVTKTTQNLDIVRVDEARQLLLVRGAVPGAKNGFVTVRPAVKVKAKKGAN</sequence>
<keyword id="KW-0488">Methylation</keyword>
<keyword id="KW-1185">Reference proteome</keyword>
<keyword id="KW-0687">Ribonucleoprotein</keyword>
<keyword id="KW-0689">Ribosomal protein</keyword>
<keyword id="KW-0694">RNA-binding</keyword>
<keyword id="KW-0699">rRNA-binding</keyword>
<protein>
    <recommendedName>
        <fullName evidence="1">Large ribosomal subunit protein uL3</fullName>
    </recommendedName>
    <alternativeName>
        <fullName evidence="3">50S ribosomal protein L3</fullName>
    </alternativeName>
</protein>
<gene>
    <name evidence="1" type="primary">rplC</name>
    <name type="ordered locus">Mpe_A3443</name>
</gene>
<feature type="chain" id="PRO_0000353613" description="Large ribosomal subunit protein uL3">
    <location>
        <begin position="1"/>
        <end position="226"/>
    </location>
</feature>
<feature type="region of interest" description="Disordered" evidence="2">
    <location>
        <begin position="136"/>
        <end position="162"/>
    </location>
</feature>
<feature type="compositionally biased region" description="Polar residues" evidence="2">
    <location>
        <begin position="137"/>
        <end position="158"/>
    </location>
</feature>
<feature type="modified residue" description="N5-methylglutamine" evidence="1">
    <location>
        <position position="160"/>
    </location>
</feature>
<accession>A2SLF7</accession>
<reference key="1">
    <citation type="journal article" date="2007" name="J. Bacteriol.">
        <title>Whole-genome analysis of the methyl tert-butyl ether-degrading beta-proteobacterium Methylibium petroleiphilum PM1.</title>
        <authorList>
            <person name="Kane S.R."/>
            <person name="Chakicherla A.Y."/>
            <person name="Chain P.S.G."/>
            <person name="Schmidt R."/>
            <person name="Shin M.W."/>
            <person name="Legler T.C."/>
            <person name="Scow K.M."/>
            <person name="Larimer F.W."/>
            <person name="Lucas S.M."/>
            <person name="Richardson P.M."/>
            <person name="Hristova K.R."/>
        </authorList>
    </citation>
    <scope>NUCLEOTIDE SEQUENCE [LARGE SCALE GENOMIC DNA]</scope>
    <source>
        <strain>ATCC BAA-1232 / LMG 22953 / PM1</strain>
    </source>
</reference>
<comment type="function">
    <text evidence="1">One of the primary rRNA binding proteins, it binds directly near the 3'-end of the 23S rRNA, where it nucleates assembly of the 50S subunit.</text>
</comment>
<comment type="subunit">
    <text evidence="1">Part of the 50S ribosomal subunit. Forms a cluster with proteins L14 and L19.</text>
</comment>
<comment type="PTM">
    <text evidence="1">Methylated by PrmB.</text>
</comment>
<comment type="similarity">
    <text evidence="1">Belongs to the universal ribosomal protein uL3 family.</text>
</comment>
<comment type="sequence caution" evidence="3">
    <conflict type="erroneous initiation">
        <sequence resource="EMBL-CDS" id="ABM96396"/>
    </conflict>
</comment>
<proteinExistence type="inferred from homology"/>
<organism>
    <name type="scientific">Methylibium petroleiphilum (strain ATCC BAA-1232 / LMG 22953 / PM1)</name>
    <dbReference type="NCBI Taxonomy" id="420662"/>
    <lineage>
        <taxon>Bacteria</taxon>
        <taxon>Pseudomonadati</taxon>
        <taxon>Pseudomonadota</taxon>
        <taxon>Betaproteobacteria</taxon>
        <taxon>Burkholderiales</taxon>
        <taxon>Sphaerotilaceae</taxon>
        <taxon>Methylibium</taxon>
    </lineage>
</organism>
<name>RL3_METPP</name>
<dbReference type="EMBL" id="CP000555">
    <property type="protein sequence ID" value="ABM96396.1"/>
    <property type="status" value="ALT_INIT"/>
    <property type="molecule type" value="Genomic_DNA"/>
</dbReference>
<dbReference type="RefSeq" id="WP_041929744.1">
    <property type="nucleotide sequence ID" value="NC_008825.1"/>
</dbReference>
<dbReference type="SMR" id="A2SLF7"/>
<dbReference type="STRING" id="420662.Mpe_A3443"/>
<dbReference type="KEGG" id="mpt:Mpe_A3443"/>
<dbReference type="eggNOG" id="COG0087">
    <property type="taxonomic scope" value="Bacteria"/>
</dbReference>
<dbReference type="HOGENOM" id="CLU_044142_4_1_4"/>
<dbReference type="Proteomes" id="UP000000366">
    <property type="component" value="Chromosome"/>
</dbReference>
<dbReference type="GO" id="GO:0022625">
    <property type="term" value="C:cytosolic large ribosomal subunit"/>
    <property type="evidence" value="ECO:0007669"/>
    <property type="project" value="TreeGrafter"/>
</dbReference>
<dbReference type="GO" id="GO:0019843">
    <property type="term" value="F:rRNA binding"/>
    <property type="evidence" value="ECO:0007669"/>
    <property type="project" value="UniProtKB-UniRule"/>
</dbReference>
<dbReference type="GO" id="GO:0003735">
    <property type="term" value="F:structural constituent of ribosome"/>
    <property type="evidence" value="ECO:0007669"/>
    <property type="project" value="InterPro"/>
</dbReference>
<dbReference type="GO" id="GO:0006412">
    <property type="term" value="P:translation"/>
    <property type="evidence" value="ECO:0007669"/>
    <property type="project" value="UniProtKB-UniRule"/>
</dbReference>
<dbReference type="FunFam" id="2.40.30.10:FF:000004">
    <property type="entry name" value="50S ribosomal protein L3"/>
    <property type="match status" value="1"/>
</dbReference>
<dbReference type="FunFam" id="3.30.160.810:FF:000001">
    <property type="entry name" value="50S ribosomal protein L3"/>
    <property type="match status" value="1"/>
</dbReference>
<dbReference type="Gene3D" id="3.30.160.810">
    <property type="match status" value="1"/>
</dbReference>
<dbReference type="Gene3D" id="2.40.30.10">
    <property type="entry name" value="Translation factors"/>
    <property type="match status" value="1"/>
</dbReference>
<dbReference type="HAMAP" id="MF_01325_B">
    <property type="entry name" value="Ribosomal_uL3_B"/>
    <property type="match status" value="1"/>
</dbReference>
<dbReference type="InterPro" id="IPR000597">
    <property type="entry name" value="Ribosomal_uL3"/>
</dbReference>
<dbReference type="InterPro" id="IPR019927">
    <property type="entry name" value="Ribosomal_uL3_bac/org-type"/>
</dbReference>
<dbReference type="InterPro" id="IPR019926">
    <property type="entry name" value="Ribosomal_uL3_CS"/>
</dbReference>
<dbReference type="InterPro" id="IPR009000">
    <property type="entry name" value="Transl_B-barrel_sf"/>
</dbReference>
<dbReference type="NCBIfam" id="TIGR03625">
    <property type="entry name" value="L3_bact"/>
    <property type="match status" value="1"/>
</dbReference>
<dbReference type="PANTHER" id="PTHR11229">
    <property type="entry name" value="50S RIBOSOMAL PROTEIN L3"/>
    <property type="match status" value="1"/>
</dbReference>
<dbReference type="PANTHER" id="PTHR11229:SF16">
    <property type="entry name" value="LARGE RIBOSOMAL SUBUNIT PROTEIN UL3C"/>
    <property type="match status" value="1"/>
</dbReference>
<dbReference type="Pfam" id="PF00297">
    <property type="entry name" value="Ribosomal_L3"/>
    <property type="match status" value="1"/>
</dbReference>
<dbReference type="SUPFAM" id="SSF50447">
    <property type="entry name" value="Translation proteins"/>
    <property type="match status" value="1"/>
</dbReference>
<dbReference type="PROSITE" id="PS00474">
    <property type="entry name" value="RIBOSOMAL_L3"/>
    <property type="match status" value="1"/>
</dbReference>